<reference key="1">
    <citation type="journal article" date="2000" name="J. Biol. Chem.">
        <title>Cloning of factors related to HIV-inducible LBP proteins that regulate steroidogenic factor-1-independent human placental transcription of the cholesterol side-chain cleavage enzyme, P450scc.</title>
        <authorList>
            <person name="Huang N."/>
            <person name="Miller W.L."/>
        </authorList>
    </citation>
    <scope>NUCLEOTIDE SEQUENCE [MRNA] (ISOFORM 1)</scope>
    <scope>TISSUE SPECIFICITY</scope>
    <source>
        <tissue>Placenta</tissue>
    </source>
</reference>
<reference key="2">
    <citation type="journal article" date="2002" name="Mech. Dev.">
        <title>A highly conserved novel family of mammalian developmental transcription factors related to Drosophila grainyhead.</title>
        <authorList>
            <person name="Wilanowski T."/>
            <person name="Tuckfield A."/>
            <person name="Cerruti L."/>
            <person name="O'Connell S."/>
            <person name="Saint R."/>
            <person name="Parekh V."/>
            <person name="Tao J."/>
            <person name="Cunningham J.M."/>
            <person name="Jane S.M."/>
        </authorList>
    </citation>
    <scope>NUCLEOTIDE SEQUENCE [MRNA] (ISOFORM 2)</scope>
    <scope>FUNCTION</scope>
    <scope>TISSUE SPECIFICITY</scope>
    <scope>ALTERNATIVE SPLICING</scope>
    <scope>DEVELOPMENTAL STAGE</scope>
    <scope>INTERACTION WITH GRHL2</scope>
    <source>
        <tissue>Fetal brain</tissue>
    </source>
</reference>
<reference key="3">
    <citation type="journal article" date="2004" name="Nat. Genet.">
        <title>Complete sequencing and characterization of 21,243 full-length human cDNAs.</title>
        <authorList>
            <person name="Ota T."/>
            <person name="Suzuki Y."/>
            <person name="Nishikawa T."/>
            <person name="Otsuki T."/>
            <person name="Sugiyama T."/>
            <person name="Irie R."/>
            <person name="Wakamatsu A."/>
            <person name="Hayashi K."/>
            <person name="Sato H."/>
            <person name="Nagai K."/>
            <person name="Kimura K."/>
            <person name="Makita H."/>
            <person name="Sekine M."/>
            <person name="Obayashi M."/>
            <person name="Nishi T."/>
            <person name="Shibahara T."/>
            <person name="Tanaka T."/>
            <person name="Ishii S."/>
            <person name="Yamamoto J."/>
            <person name="Saito K."/>
            <person name="Kawai Y."/>
            <person name="Isono Y."/>
            <person name="Nakamura Y."/>
            <person name="Nagahari K."/>
            <person name="Murakami K."/>
            <person name="Yasuda T."/>
            <person name="Iwayanagi T."/>
            <person name="Wagatsuma M."/>
            <person name="Shiratori A."/>
            <person name="Sudo H."/>
            <person name="Hosoiri T."/>
            <person name="Kaku Y."/>
            <person name="Kodaira H."/>
            <person name="Kondo H."/>
            <person name="Sugawara M."/>
            <person name="Takahashi M."/>
            <person name="Kanda K."/>
            <person name="Yokoi T."/>
            <person name="Furuya T."/>
            <person name="Kikkawa E."/>
            <person name="Omura Y."/>
            <person name="Abe K."/>
            <person name="Kamihara K."/>
            <person name="Katsuta N."/>
            <person name="Sato K."/>
            <person name="Tanikawa M."/>
            <person name="Yamazaki M."/>
            <person name="Ninomiya K."/>
            <person name="Ishibashi T."/>
            <person name="Yamashita H."/>
            <person name="Murakawa K."/>
            <person name="Fujimori K."/>
            <person name="Tanai H."/>
            <person name="Kimata M."/>
            <person name="Watanabe M."/>
            <person name="Hiraoka S."/>
            <person name="Chiba Y."/>
            <person name="Ishida S."/>
            <person name="Ono Y."/>
            <person name="Takiguchi S."/>
            <person name="Watanabe S."/>
            <person name="Yosida M."/>
            <person name="Hotuta T."/>
            <person name="Kusano J."/>
            <person name="Kanehori K."/>
            <person name="Takahashi-Fujii A."/>
            <person name="Hara H."/>
            <person name="Tanase T.-O."/>
            <person name="Nomura Y."/>
            <person name="Togiya S."/>
            <person name="Komai F."/>
            <person name="Hara R."/>
            <person name="Takeuchi K."/>
            <person name="Arita M."/>
            <person name="Imose N."/>
            <person name="Musashino K."/>
            <person name="Yuuki H."/>
            <person name="Oshima A."/>
            <person name="Sasaki N."/>
            <person name="Aotsuka S."/>
            <person name="Yoshikawa Y."/>
            <person name="Matsunawa H."/>
            <person name="Ichihara T."/>
            <person name="Shiohata N."/>
            <person name="Sano S."/>
            <person name="Moriya S."/>
            <person name="Momiyama H."/>
            <person name="Satoh N."/>
            <person name="Takami S."/>
            <person name="Terashima Y."/>
            <person name="Suzuki O."/>
            <person name="Nakagawa S."/>
            <person name="Senoh A."/>
            <person name="Mizoguchi H."/>
            <person name="Goto Y."/>
            <person name="Shimizu F."/>
            <person name="Wakebe H."/>
            <person name="Hishigaki H."/>
            <person name="Watanabe T."/>
            <person name="Sugiyama A."/>
            <person name="Takemoto M."/>
            <person name="Kawakami B."/>
            <person name="Yamazaki M."/>
            <person name="Watanabe K."/>
            <person name="Kumagai A."/>
            <person name="Itakura S."/>
            <person name="Fukuzumi Y."/>
            <person name="Fujimori Y."/>
            <person name="Komiyama M."/>
            <person name="Tashiro H."/>
            <person name="Tanigami A."/>
            <person name="Fujiwara T."/>
            <person name="Ono T."/>
            <person name="Yamada K."/>
            <person name="Fujii Y."/>
            <person name="Ozaki K."/>
            <person name="Hirao M."/>
            <person name="Ohmori Y."/>
            <person name="Kawabata A."/>
            <person name="Hikiji T."/>
            <person name="Kobatake N."/>
            <person name="Inagaki H."/>
            <person name="Ikema Y."/>
            <person name="Okamoto S."/>
            <person name="Okitani R."/>
            <person name="Kawakami T."/>
            <person name="Noguchi S."/>
            <person name="Itoh T."/>
            <person name="Shigeta K."/>
            <person name="Senba T."/>
            <person name="Matsumura K."/>
            <person name="Nakajima Y."/>
            <person name="Mizuno T."/>
            <person name="Morinaga M."/>
            <person name="Sasaki M."/>
            <person name="Togashi T."/>
            <person name="Oyama M."/>
            <person name="Hata H."/>
            <person name="Watanabe M."/>
            <person name="Komatsu T."/>
            <person name="Mizushima-Sugano J."/>
            <person name="Satoh T."/>
            <person name="Shirai Y."/>
            <person name="Takahashi Y."/>
            <person name="Nakagawa K."/>
            <person name="Okumura K."/>
            <person name="Nagase T."/>
            <person name="Nomura N."/>
            <person name="Kikuchi H."/>
            <person name="Masuho Y."/>
            <person name="Yamashita R."/>
            <person name="Nakai K."/>
            <person name="Yada T."/>
            <person name="Nakamura Y."/>
            <person name="Ohara O."/>
            <person name="Isogai T."/>
            <person name="Sugano S."/>
        </authorList>
    </citation>
    <scope>NUCLEOTIDE SEQUENCE [LARGE SCALE MRNA] (ISOFORM 1)</scope>
    <source>
        <tissue>Trachea</tissue>
    </source>
</reference>
<reference key="4">
    <citation type="journal article" date="2005" name="Nature">
        <title>Generation and annotation of the DNA sequences of human chromosomes 2 and 4.</title>
        <authorList>
            <person name="Hillier L.W."/>
            <person name="Graves T.A."/>
            <person name="Fulton R.S."/>
            <person name="Fulton L.A."/>
            <person name="Pepin K.H."/>
            <person name="Minx P."/>
            <person name="Wagner-McPherson C."/>
            <person name="Layman D."/>
            <person name="Wylie K."/>
            <person name="Sekhon M."/>
            <person name="Becker M.C."/>
            <person name="Fewell G.A."/>
            <person name="Delehaunty K.D."/>
            <person name="Miner T.L."/>
            <person name="Nash W.E."/>
            <person name="Kremitzki C."/>
            <person name="Oddy L."/>
            <person name="Du H."/>
            <person name="Sun H."/>
            <person name="Bradshaw-Cordum H."/>
            <person name="Ali J."/>
            <person name="Carter J."/>
            <person name="Cordes M."/>
            <person name="Harris A."/>
            <person name="Isak A."/>
            <person name="van Brunt A."/>
            <person name="Nguyen C."/>
            <person name="Du F."/>
            <person name="Courtney L."/>
            <person name="Kalicki J."/>
            <person name="Ozersky P."/>
            <person name="Abbott S."/>
            <person name="Armstrong J."/>
            <person name="Belter E.A."/>
            <person name="Caruso L."/>
            <person name="Cedroni M."/>
            <person name="Cotton M."/>
            <person name="Davidson T."/>
            <person name="Desai A."/>
            <person name="Elliott G."/>
            <person name="Erb T."/>
            <person name="Fronick C."/>
            <person name="Gaige T."/>
            <person name="Haakenson W."/>
            <person name="Haglund K."/>
            <person name="Holmes A."/>
            <person name="Harkins R."/>
            <person name="Kim K."/>
            <person name="Kruchowski S.S."/>
            <person name="Strong C.M."/>
            <person name="Grewal N."/>
            <person name="Goyea E."/>
            <person name="Hou S."/>
            <person name="Levy A."/>
            <person name="Martinka S."/>
            <person name="Mead K."/>
            <person name="McLellan M.D."/>
            <person name="Meyer R."/>
            <person name="Randall-Maher J."/>
            <person name="Tomlinson C."/>
            <person name="Dauphin-Kohlberg S."/>
            <person name="Kozlowicz-Reilly A."/>
            <person name="Shah N."/>
            <person name="Swearengen-Shahid S."/>
            <person name="Snider J."/>
            <person name="Strong J.T."/>
            <person name="Thompson J."/>
            <person name="Yoakum M."/>
            <person name="Leonard S."/>
            <person name="Pearman C."/>
            <person name="Trani L."/>
            <person name="Radionenko M."/>
            <person name="Waligorski J.E."/>
            <person name="Wang C."/>
            <person name="Rock S.M."/>
            <person name="Tin-Wollam A.-M."/>
            <person name="Maupin R."/>
            <person name="Latreille P."/>
            <person name="Wendl M.C."/>
            <person name="Yang S.-P."/>
            <person name="Pohl C."/>
            <person name="Wallis J.W."/>
            <person name="Spieth J."/>
            <person name="Bieri T.A."/>
            <person name="Berkowicz N."/>
            <person name="Nelson J.O."/>
            <person name="Osborne J."/>
            <person name="Ding L."/>
            <person name="Meyer R."/>
            <person name="Sabo A."/>
            <person name="Shotland Y."/>
            <person name="Sinha P."/>
            <person name="Wohldmann P.E."/>
            <person name="Cook L.L."/>
            <person name="Hickenbotham M.T."/>
            <person name="Eldred J."/>
            <person name="Williams D."/>
            <person name="Jones T.A."/>
            <person name="She X."/>
            <person name="Ciccarelli F.D."/>
            <person name="Izaurralde E."/>
            <person name="Taylor J."/>
            <person name="Schmutz J."/>
            <person name="Myers R.M."/>
            <person name="Cox D.R."/>
            <person name="Huang X."/>
            <person name="McPherson J.D."/>
            <person name="Mardis E.R."/>
            <person name="Clifton S.W."/>
            <person name="Warren W.C."/>
            <person name="Chinwalla A.T."/>
            <person name="Eddy S.R."/>
            <person name="Marra M.A."/>
            <person name="Ovcharenko I."/>
            <person name="Furey T.S."/>
            <person name="Miller W."/>
            <person name="Eichler E.E."/>
            <person name="Bork P."/>
            <person name="Suyama M."/>
            <person name="Torrents D."/>
            <person name="Waterston R.H."/>
            <person name="Wilson R.K."/>
        </authorList>
    </citation>
    <scope>NUCLEOTIDE SEQUENCE [LARGE SCALE GENOMIC DNA]</scope>
</reference>
<reference key="5">
    <citation type="submission" date="2005-09" db="EMBL/GenBank/DDBJ databases">
        <authorList>
            <person name="Mural R.J."/>
            <person name="Istrail S."/>
            <person name="Sutton G.G."/>
            <person name="Florea L."/>
            <person name="Halpern A.L."/>
            <person name="Mobarry C.M."/>
            <person name="Lippert R."/>
            <person name="Walenz B."/>
            <person name="Shatkay H."/>
            <person name="Dew I."/>
            <person name="Miller J.R."/>
            <person name="Flanigan M.J."/>
            <person name="Edwards N.J."/>
            <person name="Bolanos R."/>
            <person name="Fasulo D."/>
            <person name="Halldorsson B.V."/>
            <person name="Hannenhalli S."/>
            <person name="Turner R."/>
            <person name="Yooseph S."/>
            <person name="Lu F."/>
            <person name="Nusskern D.R."/>
            <person name="Shue B.C."/>
            <person name="Zheng X.H."/>
            <person name="Zhong F."/>
            <person name="Delcher A.L."/>
            <person name="Huson D.H."/>
            <person name="Kravitz S.A."/>
            <person name="Mouchard L."/>
            <person name="Reinert K."/>
            <person name="Remington K.A."/>
            <person name="Clark A.G."/>
            <person name="Waterman M.S."/>
            <person name="Eichler E.E."/>
            <person name="Adams M.D."/>
            <person name="Hunkapiller M.W."/>
            <person name="Myers E.W."/>
            <person name="Venter J.C."/>
        </authorList>
    </citation>
    <scope>NUCLEOTIDE SEQUENCE [LARGE SCALE GENOMIC DNA]</scope>
</reference>
<reference key="6">
    <citation type="journal article" date="2004" name="Genome Res.">
        <title>The status, quality, and expansion of the NIH full-length cDNA project: the Mammalian Gene Collection (MGC).</title>
        <authorList>
            <consortium name="The MGC Project Team"/>
        </authorList>
    </citation>
    <scope>NUCLEOTIDE SEQUENCE [LARGE SCALE MRNA] (ISOFORMS 1 AND 3)</scope>
    <scope>VARIANTS SER-191 AND ILE-397</scope>
</reference>
<reference key="7">
    <citation type="journal article" date="2003" name="Biochem. J.">
        <title>The identification and characterization of human sister-of-mammalian grainyhead (SOM) expands the grainyhead-like family of developmental transcription factors.</title>
        <authorList>
            <person name="Ting S.B."/>
            <person name="Wilanowski T."/>
            <person name="Cerruti L."/>
            <person name="Zhao L.L."/>
            <person name="Cunningham J.M."/>
            <person name="Jane S.M."/>
        </authorList>
    </citation>
    <scope>INTERACTION WITH GRHL3</scope>
</reference>
<reference key="8">
    <citation type="journal article" date="2008" name="EMBO J.">
        <title>Perturbed desmosomal cadherin expression in grainy head-like 1-null mice.</title>
        <authorList>
            <person name="Wilanowski T."/>
            <person name="Caddy J."/>
            <person name="Ting S.B."/>
            <person name="Hislop N.R."/>
            <person name="Cerruti L."/>
            <person name="Auden A."/>
            <person name="Zhao L.L."/>
            <person name="Asquith S."/>
            <person name="Ellis S."/>
            <person name="Sinclair R."/>
            <person name="Cunningham J.M."/>
            <person name="Jane S.M."/>
        </authorList>
    </citation>
    <scope>FUNCTION</scope>
    <scope>SUBCELLULAR LOCATION</scope>
</reference>
<reference key="9">
    <citation type="journal article" date="2013" name="J. Proteome Res.">
        <title>Toward a comprehensive characterization of a human cancer cell phosphoproteome.</title>
        <authorList>
            <person name="Zhou H."/>
            <person name="Di Palma S."/>
            <person name="Preisinger C."/>
            <person name="Peng M."/>
            <person name="Polat A.N."/>
            <person name="Heck A.J."/>
            <person name="Mohammed S."/>
        </authorList>
    </citation>
    <scope>PHOSPHORYLATION [LARGE SCALE ANALYSIS] AT THR-208</scope>
    <scope>IDENTIFICATION BY MASS SPECTROMETRY [LARGE SCALE ANALYSIS]</scope>
    <source>
        <tissue>Cervix carcinoma</tissue>
    </source>
</reference>
<reference key="10">
    <citation type="journal article" date="2022" name="Nat. Commun.">
        <title>Grainyhead 1 acts as a drug-inducible conserved transcriptional regulator linked to insulin signaling and lifespan.</title>
        <authorList>
            <person name="Grigolon G."/>
            <person name="Araldi E."/>
            <person name="Erni R."/>
            <person name="Wu J.Y."/>
            <person name="Thomas C."/>
            <person name="La Fortezza M."/>
            <person name="Laube B."/>
            <person name="Poehlmann D."/>
            <person name="Stoffel M."/>
            <person name="Zarse K."/>
            <person name="Carreira E.M."/>
            <person name="Ristow M."/>
            <person name="Fischer F."/>
        </authorList>
    </citation>
    <scope>FUNCTION</scope>
    <scope>INTERACTION WITH GRHL2</scope>
    <scope>SUBCELLULAR LOCATION</scope>
    <scope>METHYLATION</scope>
    <scope>MUTAGENESIS OF ARG-9 AND LYS-116</scope>
</reference>
<reference key="11">
    <citation type="journal article" date="2018" name="Nucleic Acids Res.">
        <title>Structural basis of gene regulation by the Grainyhead/CP2 transcription factor family.</title>
        <authorList>
            <person name="Ming Q."/>
            <person name="Roske Y."/>
            <person name="Schuetz A."/>
            <person name="Walentin K."/>
            <person name="Ibraimi I."/>
            <person name="Schmidt-Ott K.M."/>
            <person name="Heinemann U."/>
        </authorList>
    </citation>
    <scope>X-RAY CRYSTALLOGRAPHY (2.35 ANGSTROMS) OF 248-485 IN COMPLEX WITH DNA</scope>
    <scope>FUNCTION</scope>
    <scope>SUBUNIT</scope>
    <scope>MUTAGENESIS OF LEU-378; THR-380; GLN-385; CYS-421; ARG-427; LYS-428 AND ARG-430</scope>
</reference>
<accession>Q9NZI5</accession>
<accession>A6NLA4</accession>
<accession>B2R7E4</accession>
<accession>B5MEC2</accession>
<accession>Q53T93</accession>
<accession>Q6NWN7</accession>
<accession>Q6NWN8</accession>
<accession>Q6NWN9</accession>
<accession>Q8NI33</accession>
<evidence type="ECO:0000250" key="1">
    <source>
        <dbReference type="UniProtKB" id="Q8K5C0"/>
    </source>
</evidence>
<evidence type="ECO:0000250" key="2">
    <source>
        <dbReference type="UniProtKB" id="Q921D9"/>
    </source>
</evidence>
<evidence type="ECO:0000255" key="3">
    <source>
        <dbReference type="PROSITE-ProRule" id="PRU01313"/>
    </source>
</evidence>
<evidence type="ECO:0000256" key="4">
    <source>
        <dbReference type="SAM" id="MobiDB-lite"/>
    </source>
</evidence>
<evidence type="ECO:0000269" key="5">
    <source>
    </source>
</evidence>
<evidence type="ECO:0000269" key="6">
    <source>
    </source>
</evidence>
<evidence type="ECO:0000269" key="7">
    <source>
    </source>
</evidence>
<evidence type="ECO:0000269" key="8">
    <source>
    </source>
</evidence>
<evidence type="ECO:0000269" key="9">
    <source>
    </source>
</evidence>
<evidence type="ECO:0000269" key="10">
    <source>
    </source>
</evidence>
<evidence type="ECO:0000269" key="11">
    <source>
    </source>
</evidence>
<evidence type="ECO:0000303" key="12">
    <source>
    </source>
</evidence>
<evidence type="ECO:0000303" key="13">
    <source>
    </source>
</evidence>
<evidence type="ECO:0000305" key="14"/>
<evidence type="ECO:0000312" key="15">
    <source>
        <dbReference type="HGNC" id="HGNC:17923"/>
    </source>
</evidence>
<evidence type="ECO:0007744" key="16">
    <source>
    </source>
</evidence>
<evidence type="ECO:0007829" key="17">
    <source>
        <dbReference type="PDB" id="5MPF"/>
    </source>
</evidence>
<evidence type="ECO:0007829" key="18">
    <source>
        <dbReference type="PDB" id="5MPH"/>
    </source>
</evidence>
<evidence type="ECO:0007829" key="19">
    <source>
        <dbReference type="PDB" id="5MPI"/>
    </source>
</evidence>
<sequence>MTQEYDNKRPVLVLQNEALYPQRRSYTSEDEAWKSFLENPLTAATKAMMSINGDEDSAAALGLLYDYYKVPRERRSSTAKPEVEHPEPDHSKRNSIPIVTEQPLISAGENRVQVLKNVPFNIVLPHGNQLGIDKRGHLTAPDTTVTVSIATMPTHSIKTETQPHGFAVGIPPAVYHPEPTERVVVFDRNLNTDQFSSGAQAPNAQRRTPDSTFSETFKEGVQEVFFPSDLSLRMPGMNSEDYVFDSVSGNNFEYTLEASKSLRQKPGDSTMTYLNKGQFYPITLKEVSSSEGIHHPISKVRSVIMVVFAEDKSREDQLRHWKYWHSRQHTAKQRCIDIADYKESFNTISNIEEIAYNAISFTWDINDEAKVFISVNCLSTDFSSQKGVKGLPLNIQVDTYSYNNRSNKPVHRAYCQIKVFCDKGAERKIRDEERKQSKRKVSDVKVPLLPSHKRMDITVFKPFIDLDTQPVLFIPDVHFANLQRGTHVLPIASEELEGEGSVLKRGPYGTEDDFAVPPSTKLARIEEPKRVLLYVRKESEEVFDALMLKTPSLKGLMEAISDKYDVPHDKIGKIFKKCKKGILVNMDDNIVKHYSNEDTFQLQIEEAGGSYKLTLTEI</sequence>
<organism>
    <name type="scientific">Homo sapiens</name>
    <name type="common">Human</name>
    <dbReference type="NCBI Taxonomy" id="9606"/>
    <lineage>
        <taxon>Eukaryota</taxon>
        <taxon>Metazoa</taxon>
        <taxon>Chordata</taxon>
        <taxon>Craniata</taxon>
        <taxon>Vertebrata</taxon>
        <taxon>Euteleostomi</taxon>
        <taxon>Mammalia</taxon>
        <taxon>Eutheria</taxon>
        <taxon>Euarchontoglires</taxon>
        <taxon>Primates</taxon>
        <taxon>Haplorrhini</taxon>
        <taxon>Catarrhini</taxon>
        <taxon>Hominidae</taxon>
        <taxon>Homo</taxon>
    </lineage>
</organism>
<proteinExistence type="evidence at protein level"/>
<protein>
    <recommendedName>
        <fullName evidence="15">Grainyhead-like protein 1 homolog</fullName>
    </recommendedName>
    <alternativeName>
        <fullName>Mammalian grainyhead</fullName>
    </alternativeName>
    <alternativeName>
        <fullName>NH32</fullName>
    </alternativeName>
    <alternativeName>
        <fullName>Transcription factor CP2-like 2</fullName>
    </alternativeName>
    <alternativeName>
        <fullName>Transcription factor LBP-32</fullName>
    </alternativeName>
</protein>
<comment type="function">
    <text evidence="2 6 9 10 11">Transcription factor involved in epithelial development. Binds directly to the consensus DNA sequence 5'-AACCGGTT-3' (PubMed:12175488, PubMed:18288204, PubMed:29309642). Important regulator of DSG1 in the context of hair anchorage and epidermal differentiation, participates in the maintenance of the skin barrier. There is no genetic interaction with GRHL3, nor functional cooperativity due to diverse target gene selectivity during epithelia development (By similarity). May play a role in regulating glucose homeostasis and insulin signaling.</text>
</comment>
<comment type="function">
    <molecule>Isoform 1</molecule>
    <text evidence="6 10">Functions as a transcription activator.</text>
</comment>
<comment type="function">
    <molecule>Isoform 2</molecule>
    <text evidence="6">May function as a repressor in tissues where both isoform 1 and isoform 2 are expressed.</text>
</comment>
<comment type="subunit">
    <text evidence="6 7 10">Binds DNA as homodimer (PubMed:29309642). Homodimer, also forms heterodimers with GRHL2 or GRHL3 (PubMed:12175488, PubMed:12549979, PubMed:29309642, PubMed:35013237).</text>
</comment>
<comment type="interaction">
    <interactant intactId="EBI-11109373">
        <id>Q9NZI5</id>
    </interactant>
    <interactant intactId="EBI-11109373">
        <id>Q9NZI5</id>
        <label>GRHL1</label>
    </interactant>
    <organismsDiffer>false</organismsDiffer>
    <experiments>2</experiments>
</comment>
<comment type="interaction">
    <interactant intactId="EBI-11109373">
        <id>Q9NZI5</id>
    </interactant>
    <interactant intactId="EBI-10219092">
        <id>Q6ISB3</id>
        <label>GRHL2</label>
    </interactant>
    <organismsDiffer>false</organismsDiffer>
    <experiments>7</experiments>
</comment>
<comment type="subcellular location">
    <subcellularLocation>
        <location evidence="9 11">Nucleus</location>
    </subcellularLocation>
</comment>
<comment type="alternative products">
    <event type="alternative splicing"/>
    <isoform>
        <id>Q9NZI5-1</id>
        <name>1</name>
        <name>p70 MGR</name>
        <sequence type="displayed"/>
    </isoform>
    <isoform>
        <id>Q9NZI5-2</id>
        <name>2</name>
        <name>p49 MGR</name>
        <sequence type="described" ref="VSP_017636 VSP_017637"/>
    </isoform>
    <isoform>
        <id>Q9NZI5-3</id>
        <name>3</name>
        <sequence type="described" ref="VSP_017638 VSP_017639"/>
    </isoform>
</comment>
<comment type="tissue specificity">
    <text evidence="5 6">Isoform 1 is highly expressed in brain, pancreas, tonsil, placenta and kidney. Isoform 2 is highly expressed in brain and liver. Expressed at very low levels in non-steroidogenic cells.</text>
</comment>
<comment type="developmental stage">
    <text evidence="6">Expressed in fetal liver and brain.</text>
</comment>
<comment type="PTM">
    <text evidence="11">Methylation at Arg-9 and Lys-116 may be involved in regulating transcriptional activation.</text>
</comment>
<comment type="miscellaneous">
    <text evidence="2">GRHL genes (GRHL1, GRHL2 and GRHL3) show a paradoxical lack of redundancy despite their extensive sequence identity in the DNA-binding and protein dimerization domains and the fact that the core consensus DNA binding sites are identical. They have related but remarkably different functions during embryogenesis because of their differential spatiotemporal expression patterns during development.</text>
</comment>
<comment type="similarity">
    <text evidence="14">Belongs to the grh/CP2 family. Grainyhead subfamily.</text>
</comment>
<dbReference type="EMBL" id="AF198489">
    <property type="protein sequence ID" value="AAF32276.1"/>
    <property type="molecule type" value="mRNA"/>
</dbReference>
<dbReference type="EMBL" id="AF411210">
    <property type="protein sequence ID" value="AAM22616.1"/>
    <property type="molecule type" value="mRNA"/>
</dbReference>
<dbReference type="EMBL" id="AK312950">
    <property type="protein sequence ID" value="BAG35791.1"/>
    <property type="molecule type" value="mRNA"/>
</dbReference>
<dbReference type="EMBL" id="AC010969">
    <property type="protein sequence ID" value="AAX93273.1"/>
    <property type="molecule type" value="Genomic_DNA"/>
</dbReference>
<dbReference type="EMBL" id="CH471053">
    <property type="protein sequence ID" value="EAX00973.1"/>
    <property type="molecule type" value="Genomic_DNA"/>
</dbReference>
<dbReference type="EMBL" id="BC067519">
    <property type="protein sequence ID" value="AAH67519.1"/>
    <property type="molecule type" value="mRNA"/>
</dbReference>
<dbReference type="EMBL" id="BC067520">
    <property type="protein sequence ID" value="AAH67520.1"/>
    <property type="molecule type" value="mRNA"/>
</dbReference>
<dbReference type="EMBL" id="BC067521">
    <property type="protein sequence ID" value="AAH67521.1"/>
    <property type="molecule type" value="mRNA"/>
</dbReference>
<dbReference type="CCDS" id="CCDS33144.2">
    <molecule id="Q9NZI5-1"/>
</dbReference>
<dbReference type="RefSeq" id="NP_937825.2">
    <molecule id="Q9NZI5-1"/>
    <property type="nucleotide sequence ID" value="NM_198182.3"/>
</dbReference>
<dbReference type="RefSeq" id="XP_005246216.1">
    <property type="nucleotide sequence ID" value="XM_005246159.3"/>
</dbReference>
<dbReference type="RefSeq" id="XP_047299975.1">
    <molecule id="Q9NZI5-2"/>
    <property type="nucleotide sequence ID" value="XM_047444019.1"/>
</dbReference>
<dbReference type="RefSeq" id="XP_054197521.1">
    <molecule id="Q9NZI5-2"/>
    <property type="nucleotide sequence ID" value="XM_054341546.1"/>
</dbReference>
<dbReference type="PDB" id="5MPF">
    <property type="method" value="X-ray"/>
    <property type="resolution" value="2.92 A"/>
    <property type="chains" value="A/B=248-485"/>
</dbReference>
<dbReference type="PDB" id="5MPH">
    <property type="method" value="X-ray"/>
    <property type="resolution" value="2.34 A"/>
    <property type="chains" value="A=248-485"/>
</dbReference>
<dbReference type="PDB" id="5MPI">
    <property type="method" value="X-ray"/>
    <property type="resolution" value="2.35 A"/>
    <property type="chains" value="A=248-485"/>
</dbReference>
<dbReference type="PDBsum" id="5MPF"/>
<dbReference type="PDBsum" id="5MPH"/>
<dbReference type="PDBsum" id="5MPI"/>
<dbReference type="SMR" id="Q9NZI5"/>
<dbReference type="BioGRID" id="118928">
    <property type="interactions" value="9"/>
</dbReference>
<dbReference type="FunCoup" id="Q9NZI5">
    <property type="interactions" value="2201"/>
</dbReference>
<dbReference type="IntAct" id="Q9NZI5">
    <property type="interactions" value="135"/>
</dbReference>
<dbReference type="MINT" id="Q9NZI5"/>
<dbReference type="STRING" id="9606.ENSP00000324693"/>
<dbReference type="GlyGen" id="Q9NZI5">
    <property type="glycosylation" value="1 site, 1 O-linked glycan (1 site)"/>
</dbReference>
<dbReference type="iPTMnet" id="Q9NZI5"/>
<dbReference type="PhosphoSitePlus" id="Q9NZI5"/>
<dbReference type="BioMuta" id="GRHL1"/>
<dbReference type="DMDM" id="90101332"/>
<dbReference type="jPOST" id="Q9NZI5"/>
<dbReference type="MassIVE" id="Q9NZI5"/>
<dbReference type="PaxDb" id="9606-ENSP00000324693"/>
<dbReference type="PeptideAtlas" id="Q9NZI5"/>
<dbReference type="ProteomicsDB" id="83404">
    <molecule id="Q9NZI5-1"/>
</dbReference>
<dbReference type="ProteomicsDB" id="83405">
    <molecule id="Q9NZI5-2"/>
</dbReference>
<dbReference type="ProteomicsDB" id="83406">
    <molecule id="Q9NZI5-3"/>
</dbReference>
<dbReference type="Pumba" id="Q9NZI5"/>
<dbReference type="Antibodypedia" id="1788">
    <property type="antibodies" value="117 antibodies from 23 providers"/>
</dbReference>
<dbReference type="DNASU" id="29841"/>
<dbReference type="Ensembl" id="ENST00000324907.14">
    <molecule id="Q9NZI5-1"/>
    <property type="protein sequence ID" value="ENSP00000324693.9"/>
    <property type="gene ID" value="ENSG00000134317.18"/>
</dbReference>
<dbReference type="Ensembl" id="ENST00000405379.6">
    <molecule id="Q9NZI5-2"/>
    <property type="protein sequence ID" value="ENSP00000384209.3"/>
    <property type="gene ID" value="ENSG00000134317.18"/>
</dbReference>
<dbReference type="Ensembl" id="ENST00000472167.5">
    <molecule id="Q9NZI5-3"/>
    <property type="protein sequence ID" value="ENSP00000418275.1"/>
    <property type="gene ID" value="ENSG00000134317.18"/>
</dbReference>
<dbReference type="GeneID" id="29841"/>
<dbReference type="KEGG" id="hsa:29841"/>
<dbReference type="MANE-Select" id="ENST00000324907.14">
    <property type="protein sequence ID" value="ENSP00000324693.9"/>
    <property type="RefSeq nucleotide sequence ID" value="NM_198182.3"/>
    <property type="RefSeq protein sequence ID" value="NP_937825.2"/>
</dbReference>
<dbReference type="UCSC" id="uc002raa.4">
    <molecule id="Q9NZI5-1"/>
    <property type="organism name" value="human"/>
</dbReference>
<dbReference type="AGR" id="HGNC:17923"/>
<dbReference type="CTD" id="29841"/>
<dbReference type="DisGeNET" id="29841"/>
<dbReference type="GeneCards" id="GRHL1"/>
<dbReference type="HGNC" id="HGNC:17923">
    <property type="gene designation" value="GRHL1"/>
</dbReference>
<dbReference type="HPA" id="ENSG00000134317">
    <property type="expression patterns" value="Tissue enhanced (esophagus, skin, vagina)"/>
</dbReference>
<dbReference type="MIM" id="609786">
    <property type="type" value="gene"/>
</dbReference>
<dbReference type="neXtProt" id="NX_Q9NZI5"/>
<dbReference type="OpenTargets" id="ENSG00000134317"/>
<dbReference type="PharmGKB" id="PA134971477"/>
<dbReference type="VEuPathDB" id="HostDB:ENSG00000134317"/>
<dbReference type="eggNOG" id="KOG4091">
    <property type="taxonomic scope" value="Eukaryota"/>
</dbReference>
<dbReference type="GeneTree" id="ENSGT00940000157612"/>
<dbReference type="HOGENOM" id="CLU_021156_1_1_1"/>
<dbReference type="InParanoid" id="Q9NZI5"/>
<dbReference type="OMA" id="IQPHGFT"/>
<dbReference type="OrthoDB" id="7680836at2759"/>
<dbReference type="PAN-GO" id="Q9NZI5">
    <property type="GO annotations" value="4 GO annotations based on evolutionary models"/>
</dbReference>
<dbReference type="PhylomeDB" id="Q9NZI5"/>
<dbReference type="TreeFam" id="TF314132"/>
<dbReference type="PathwayCommons" id="Q9NZI5"/>
<dbReference type="Reactome" id="R-HSA-1989781">
    <property type="pathway name" value="PPARA activates gene expression"/>
</dbReference>
<dbReference type="SignaLink" id="Q9NZI5"/>
<dbReference type="BioGRID-ORCS" id="29841">
    <property type="hits" value="16 hits in 1181 CRISPR screens"/>
</dbReference>
<dbReference type="ChiTaRS" id="GRHL1">
    <property type="organism name" value="human"/>
</dbReference>
<dbReference type="GenomeRNAi" id="29841"/>
<dbReference type="Pharos" id="Q9NZI5">
    <property type="development level" value="Tbio"/>
</dbReference>
<dbReference type="PRO" id="PR:Q9NZI5"/>
<dbReference type="Proteomes" id="UP000005640">
    <property type="component" value="Chromosome 2"/>
</dbReference>
<dbReference type="RNAct" id="Q9NZI5">
    <property type="molecule type" value="protein"/>
</dbReference>
<dbReference type="Bgee" id="ENSG00000134317">
    <property type="expression patterns" value="Expressed in upper arm skin and 150 other cell types or tissues"/>
</dbReference>
<dbReference type="ExpressionAtlas" id="Q9NZI5">
    <property type="expression patterns" value="baseline and differential"/>
</dbReference>
<dbReference type="GO" id="GO:0000785">
    <property type="term" value="C:chromatin"/>
    <property type="evidence" value="ECO:0000247"/>
    <property type="project" value="NTNU_SB"/>
</dbReference>
<dbReference type="GO" id="GO:0043231">
    <property type="term" value="C:intracellular membrane-bounded organelle"/>
    <property type="evidence" value="ECO:0000314"/>
    <property type="project" value="HPA"/>
</dbReference>
<dbReference type="GO" id="GO:0005654">
    <property type="term" value="C:nucleoplasm"/>
    <property type="evidence" value="ECO:0000314"/>
    <property type="project" value="HPA"/>
</dbReference>
<dbReference type="GO" id="GO:0005634">
    <property type="term" value="C:nucleus"/>
    <property type="evidence" value="ECO:0000314"/>
    <property type="project" value="UniProtKB"/>
</dbReference>
<dbReference type="GO" id="GO:0031490">
    <property type="term" value="F:chromatin DNA binding"/>
    <property type="evidence" value="ECO:0000314"/>
    <property type="project" value="UniProtKB"/>
</dbReference>
<dbReference type="GO" id="GO:0003677">
    <property type="term" value="F:DNA binding"/>
    <property type="evidence" value="ECO:0000314"/>
    <property type="project" value="MGI"/>
</dbReference>
<dbReference type="GO" id="GO:0001228">
    <property type="term" value="F:DNA-binding transcription activator activity, RNA polymerase II-specific"/>
    <property type="evidence" value="ECO:0000314"/>
    <property type="project" value="NTNU_SB"/>
</dbReference>
<dbReference type="GO" id="GO:0003700">
    <property type="term" value="F:DNA-binding transcription factor activity"/>
    <property type="evidence" value="ECO:0000314"/>
    <property type="project" value="MGI"/>
</dbReference>
<dbReference type="GO" id="GO:0000981">
    <property type="term" value="F:DNA-binding transcription factor activity, RNA polymerase II-specific"/>
    <property type="evidence" value="ECO:0000247"/>
    <property type="project" value="NTNU_SB"/>
</dbReference>
<dbReference type="GO" id="GO:0140297">
    <property type="term" value="F:DNA-binding transcription factor binding"/>
    <property type="evidence" value="ECO:0000353"/>
    <property type="project" value="UniProtKB"/>
</dbReference>
<dbReference type="GO" id="GO:0042802">
    <property type="term" value="F:identical protein binding"/>
    <property type="evidence" value="ECO:0000353"/>
    <property type="project" value="IntAct"/>
</dbReference>
<dbReference type="GO" id="GO:0042803">
    <property type="term" value="F:protein homodimerization activity"/>
    <property type="evidence" value="ECO:0000353"/>
    <property type="project" value="UniProtKB"/>
</dbReference>
<dbReference type="GO" id="GO:0000978">
    <property type="term" value="F:RNA polymerase II cis-regulatory region sequence-specific DNA binding"/>
    <property type="evidence" value="ECO:0000314"/>
    <property type="project" value="NTNU_SB"/>
</dbReference>
<dbReference type="GO" id="GO:0043565">
    <property type="term" value="F:sequence-specific DNA binding"/>
    <property type="evidence" value="ECO:0000314"/>
    <property type="project" value="UniProtKB"/>
</dbReference>
<dbReference type="GO" id="GO:1990837">
    <property type="term" value="F:sequence-specific double-stranded DNA binding"/>
    <property type="evidence" value="ECO:0000314"/>
    <property type="project" value="ARUK-UCL"/>
</dbReference>
<dbReference type="GO" id="GO:0000976">
    <property type="term" value="F:transcription cis-regulatory region binding"/>
    <property type="evidence" value="ECO:0000314"/>
    <property type="project" value="UniProtKB"/>
</dbReference>
<dbReference type="GO" id="GO:0002934">
    <property type="term" value="P:desmosome organization"/>
    <property type="evidence" value="ECO:0007669"/>
    <property type="project" value="Ensembl"/>
</dbReference>
<dbReference type="GO" id="GO:0008544">
    <property type="term" value="P:epidermis development"/>
    <property type="evidence" value="ECO:0000250"/>
    <property type="project" value="UniProtKB"/>
</dbReference>
<dbReference type="GO" id="GO:0061436">
    <property type="term" value="P:establishment of skin barrier"/>
    <property type="evidence" value="ECO:0007669"/>
    <property type="project" value="Ensembl"/>
</dbReference>
<dbReference type="GO" id="GO:0045944">
    <property type="term" value="P:positive regulation of transcription by RNA polymerase II"/>
    <property type="evidence" value="ECO:0000314"/>
    <property type="project" value="UniProtKB"/>
</dbReference>
<dbReference type="GO" id="GO:0006355">
    <property type="term" value="P:regulation of DNA-templated transcription"/>
    <property type="evidence" value="ECO:0000314"/>
    <property type="project" value="MGI"/>
</dbReference>
<dbReference type="GO" id="GO:0045616">
    <property type="term" value="P:regulation of keratinocyte differentiation"/>
    <property type="evidence" value="ECO:0007669"/>
    <property type="project" value="Ensembl"/>
</dbReference>
<dbReference type="GO" id="GO:0006357">
    <property type="term" value="P:regulation of transcription by RNA polymerase II"/>
    <property type="evidence" value="ECO:0000318"/>
    <property type="project" value="GO_Central"/>
</dbReference>
<dbReference type="InterPro" id="IPR007604">
    <property type="entry name" value="CP2"/>
</dbReference>
<dbReference type="InterPro" id="IPR040167">
    <property type="entry name" value="TF_CP2-like"/>
</dbReference>
<dbReference type="PANTHER" id="PTHR11037:SF16">
    <property type="entry name" value="GRAINYHEAD-LIKE PROTEIN 1 HOMOLOG"/>
    <property type="match status" value="1"/>
</dbReference>
<dbReference type="PANTHER" id="PTHR11037">
    <property type="entry name" value="TRANSCRIPTION FACTOR CP2"/>
    <property type="match status" value="1"/>
</dbReference>
<dbReference type="Pfam" id="PF04516">
    <property type="entry name" value="CP2"/>
    <property type="match status" value="1"/>
</dbReference>
<dbReference type="Pfam" id="PF25416">
    <property type="entry name" value="GRHL1_C"/>
    <property type="match status" value="1"/>
</dbReference>
<dbReference type="PROSITE" id="PS51968">
    <property type="entry name" value="GRH_CP2_DB"/>
    <property type="match status" value="1"/>
</dbReference>
<keyword id="KW-0002">3D-structure</keyword>
<keyword id="KW-0010">Activator</keyword>
<keyword id="KW-0025">Alternative splicing</keyword>
<keyword id="KW-0217">Developmental protein</keyword>
<keyword id="KW-0238">DNA-binding</keyword>
<keyword id="KW-0539">Nucleus</keyword>
<keyword id="KW-0597">Phosphoprotein</keyword>
<keyword id="KW-1267">Proteomics identification</keyword>
<keyword id="KW-1185">Reference proteome</keyword>
<keyword id="KW-0804">Transcription</keyword>
<keyword id="KW-0805">Transcription regulation</keyword>
<name>GRHL1_HUMAN</name>
<gene>
    <name evidence="15" type="primary">GRHL1</name>
    <name type="synonym">LBP32</name>
    <name type="synonym">MGR</name>
    <name evidence="15" type="synonym">TFCP2L2</name>
</gene>
<feature type="chain" id="PRO_0000227990" description="Grainyhead-like protein 1 homolog">
    <location>
        <begin position="1"/>
        <end position="618"/>
    </location>
</feature>
<feature type="domain" description="Grh/CP2 DB" evidence="3">
    <location>
        <begin position="248"/>
        <end position="474"/>
    </location>
</feature>
<feature type="region of interest" description="Transcription activation" evidence="1">
    <location>
        <begin position="1"/>
        <end position="91"/>
    </location>
</feature>
<feature type="region of interest" description="Disordered" evidence="4">
    <location>
        <begin position="74"/>
        <end position="94"/>
    </location>
</feature>
<feature type="region of interest" description="Interaction with DNA" evidence="10">
    <location>
        <begin position="380"/>
        <end position="389"/>
    </location>
</feature>
<feature type="region of interest" description="Interaction with DNA" evidence="10">
    <location>
        <begin position="427"/>
        <end position="430"/>
    </location>
</feature>
<feature type="compositionally biased region" description="Basic and acidic residues" evidence="4">
    <location>
        <begin position="74"/>
        <end position="92"/>
    </location>
</feature>
<feature type="modified residue" description="Phosphothreonine" evidence="16">
    <location>
        <position position="208"/>
    </location>
</feature>
<feature type="splice variant" id="VSP_017636" description="In isoform 2." evidence="12">
    <location>
        <begin position="1"/>
        <end position="189"/>
    </location>
</feature>
<feature type="splice variant" id="VSP_017637" description="In isoform 2." evidence="12">
    <original>LNTDQFSSGAQAPNAQRRTPDSTFSETFKEGVQEVFFPSDLSLRMPGMNSEDYVFDSVSG</original>
    <variation>MASLWESPQQCIILSPLSGWWFSIGISILTSSALVLKPQMLKGELQTRPSQRPSRKAFRR</variation>
    <location>
        <begin position="190"/>
        <end position="249"/>
    </location>
</feature>
<feature type="splice variant" id="VSP_017638" description="In isoform 3." evidence="13">
    <original>VSDVKVPLLPSHKRMDITVFKPFIDLDTQPVLFIPDVHFANLQRGTHVLPIASEELEGEGSVLKRGPYGTE</original>
    <variation>GKCPDPSSQFLMLKCHCFPLTSEWISQFSNPSLISILSLSSSFLTCTLPTCSGALMSFPLPLKNWRVKALS</variation>
    <location>
        <begin position="441"/>
        <end position="511"/>
    </location>
</feature>
<feature type="splice variant" id="VSP_017639" description="In isoform 3." evidence="13">
    <location>
        <begin position="512"/>
        <end position="618"/>
    </location>
</feature>
<feature type="sequence variant" id="VAR_025663" description="In dbSNP:rs16867256." evidence="8">
    <original>N</original>
    <variation>S</variation>
    <location>
        <position position="191"/>
    </location>
</feature>
<feature type="sequence variant" id="VAR_025664" description="In dbSNP:rs2303920." evidence="8">
    <original>V</original>
    <variation>I</variation>
    <location>
        <position position="397"/>
    </location>
</feature>
<feature type="mutagenesis site" description="Increases activity as transcriptional activator." evidence="11">
    <original>R</original>
    <variation>A</variation>
    <location>
        <position position="9"/>
    </location>
</feature>
<feature type="mutagenesis site" description="Reduces activity as transcriptional activator." evidence="11">
    <original>K</original>
    <variation>A</variation>
    <location>
        <position position="116"/>
    </location>
</feature>
<feature type="mutagenesis site" description="Decreases affinity for target DNA." evidence="10">
    <original>L</original>
    <variation>A</variation>
    <location>
        <position position="378"/>
    </location>
</feature>
<feature type="mutagenesis site" description="Decreases affinity for target DNA." evidence="10">
    <original>T</original>
    <variation>A</variation>
    <location>
        <position position="380"/>
    </location>
</feature>
<feature type="mutagenesis site" description="Decreases affinity for target DNA." evidence="10">
    <original>Q</original>
    <variation>A</variation>
    <location>
        <position position="385"/>
    </location>
</feature>
<feature type="mutagenesis site" description="No effect on affinity for target DNA." evidence="10">
    <original>C</original>
    <variation>A</variation>
    <location>
        <position position="421"/>
    </location>
</feature>
<feature type="mutagenesis site" description="Loss of activity as transcriptional activator. Strongly decreases affinity for target DNA." evidence="10">
    <original>R</original>
    <variation>A</variation>
    <location>
        <position position="427"/>
    </location>
</feature>
<feature type="mutagenesis site" description="Loss of activity as transcriptional activator. Nearly abolishes affinity for target DNA. Causes steric hindrance that impedes DNA-binding by neighboring residues." evidence="10">
    <original>R</original>
    <variation>Q</variation>
    <location>
        <position position="427"/>
    </location>
</feature>
<feature type="mutagenesis site" description="Decreases affinity for target DNA." evidence="10">
    <original>K</original>
    <variation>A</variation>
    <location>
        <position position="428"/>
    </location>
</feature>
<feature type="mutagenesis site" description="Decreases affinity for target DNA." evidence="10">
    <original>R</original>
    <variation>A</variation>
    <location>
        <position position="430"/>
    </location>
</feature>
<feature type="sequence conflict" description="In Ref. 1; AAF32276." evidence="14" ref="1">
    <original>V</original>
    <variation>A</variation>
    <location>
        <position position="13"/>
    </location>
</feature>
<feature type="sequence conflict" description="In Ref. 6; AAH67521." evidence="14" ref="6">
    <original>L</original>
    <variation>F</variation>
    <location>
        <position position="230"/>
    </location>
</feature>
<feature type="sequence conflict" description="In Ref. 6; AAH67519." evidence="14" ref="6">
    <original>I</original>
    <variation>V</variation>
    <location>
        <position position="351"/>
    </location>
</feature>
<feature type="sequence conflict" description="In Ref. 6; AAH67521." evidence="14" ref="6">
    <original>G</original>
    <variation>A</variation>
    <location>
        <position position="424"/>
    </location>
</feature>
<feature type="sequence conflict" description="In Ref. 6; AAH67520." evidence="14" ref="6">
    <original>I</original>
    <variation>V</variation>
    <location>
        <position position="582"/>
    </location>
</feature>
<feature type="strand" evidence="18">
    <location>
        <begin position="252"/>
        <end position="256"/>
    </location>
</feature>
<feature type="strand" evidence="18">
    <location>
        <begin position="258"/>
        <end position="260"/>
    </location>
</feature>
<feature type="strand" evidence="18">
    <location>
        <begin position="272"/>
        <end position="275"/>
    </location>
</feature>
<feature type="strand" evidence="18">
    <location>
        <begin position="280"/>
        <end position="286"/>
    </location>
</feature>
<feature type="strand" evidence="18">
    <location>
        <begin position="299"/>
        <end position="308"/>
    </location>
</feature>
<feature type="helix" evidence="18">
    <location>
        <begin position="314"/>
        <end position="325"/>
    </location>
</feature>
<feature type="strand" evidence="18">
    <location>
        <begin position="328"/>
        <end position="330"/>
    </location>
</feature>
<feature type="strand" evidence="18">
    <location>
        <begin position="335"/>
        <end position="338"/>
    </location>
</feature>
<feature type="helix" evidence="18">
    <location>
        <begin position="342"/>
        <end position="345"/>
    </location>
</feature>
<feature type="strand" evidence="18">
    <location>
        <begin position="349"/>
        <end position="355"/>
    </location>
</feature>
<feature type="strand" evidence="18">
    <location>
        <begin position="358"/>
        <end position="364"/>
    </location>
</feature>
<feature type="strand" evidence="18">
    <location>
        <begin position="369"/>
        <end position="375"/>
    </location>
</feature>
<feature type="turn" evidence="18">
    <location>
        <begin position="379"/>
        <end position="382"/>
    </location>
</feature>
<feature type="strand" evidence="18">
    <location>
        <begin position="393"/>
        <end position="403"/>
    </location>
</feature>
<feature type="strand" evidence="18">
    <location>
        <begin position="405"/>
        <end position="408"/>
    </location>
</feature>
<feature type="strand" evidence="18">
    <location>
        <begin position="410"/>
        <end position="421"/>
    </location>
</feature>
<feature type="helix" evidence="18">
    <location>
        <begin position="424"/>
        <end position="433"/>
    </location>
</feature>
<feature type="turn" evidence="17">
    <location>
        <begin position="434"/>
        <end position="437"/>
    </location>
</feature>
<feature type="strand" evidence="19">
    <location>
        <begin position="457"/>
        <end position="459"/>
    </location>
</feature>
<feature type="strand" evidence="19">
    <location>
        <begin position="461"/>
        <end position="463"/>
    </location>
</feature>
<feature type="strand" evidence="17">
    <location>
        <begin position="473"/>
        <end position="475"/>
    </location>
</feature>